<protein>
    <recommendedName>
        <fullName evidence="9">Gamma-aminobutyric acid receptor-associated protein-like 1</fullName>
    </recommendedName>
    <alternativeName>
        <fullName>GABA(A) receptor-associated protein-like 1</fullName>
    </alternativeName>
    <alternativeName>
        <fullName>Glandular epithelial cell protein 1</fullName>
        <shortName>GEC-1</shortName>
    </alternativeName>
</protein>
<organism>
    <name type="scientific">Mus musculus</name>
    <name type="common">Mouse</name>
    <dbReference type="NCBI Taxonomy" id="10090"/>
    <lineage>
        <taxon>Eukaryota</taxon>
        <taxon>Metazoa</taxon>
        <taxon>Chordata</taxon>
        <taxon>Craniata</taxon>
        <taxon>Vertebrata</taxon>
        <taxon>Euteleostomi</taxon>
        <taxon>Mammalia</taxon>
        <taxon>Eutheria</taxon>
        <taxon>Euarchontoglires</taxon>
        <taxon>Glires</taxon>
        <taxon>Rodentia</taxon>
        <taxon>Myomorpha</taxon>
        <taxon>Muroidea</taxon>
        <taxon>Muridae</taxon>
        <taxon>Murinae</taxon>
        <taxon>Mus</taxon>
        <taxon>Mus</taxon>
    </lineage>
</organism>
<feature type="chain" id="PRO_0000212370" description="Gamma-aminobutyric acid receptor-associated protein-like 1">
    <location>
        <begin position="1"/>
        <end position="116"/>
    </location>
</feature>
<feature type="propeptide" id="PRO_0000420209" description="Removed in mature form" evidence="10">
    <location>
        <position position="117"/>
    </location>
</feature>
<feature type="site" description="Cleavage; by ATG4B" evidence="5">
    <location>
        <begin position="116"/>
        <end position="117"/>
    </location>
</feature>
<feature type="lipid moiety-binding region" description="Phosphatidylethanolamine amidated glycine; alternate" evidence="2">
    <location>
        <position position="116"/>
    </location>
</feature>
<feature type="lipid moiety-binding region" description="Phosphatidylserine amidated glycine; alternate" evidence="2">
    <location>
        <position position="116"/>
    </location>
</feature>
<feature type="sequence conflict" description="In Ref. 3; BAE34769." evidence="9" ref="3">
    <original>K</original>
    <variation>E</variation>
    <location>
        <position position="6"/>
    </location>
</feature>
<feature type="sequence conflict" description="In Ref. 4; AAH24706." evidence="9" ref="4">
    <original>Y</original>
    <variation>H</variation>
    <location>
        <position position="49"/>
    </location>
</feature>
<feature type="helix" evidence="12">
    <location>
        <begin position="4"/>
        <end position="8"/>
    </location>
</feature>
<feature type="helix" evidence="12">
    <location>
        <begin position="11"/>
        <end position="24"/>
    </location>
</feature>
<feature type="strand" evidence="12">
    <location>
        <begin position="28"/>
        <end position="35"/>
    </location>
</feature>
<feature type="strand" evidence="12">
    <location>
        <begin position="48"/>
        <end position="52"/>
    </location>
</feature>
<feature type="helix" evidence="12">
    <location>
        <begin position="57"/>
        <end position="68"/>
    </location>
</feature>
<feature type="strand" evidence="12">
    <location>
        <begin position="77"/>
        <end position="80"/>
    </location>
</feature>
<feature type="helix" evidence="12">
    <location>
        <begin position="91"/>
        <end position="98"/>
    </location>
</feature>
<feature type="strand" evidence="12">
    <location>
        <begin position="105"/>
        <end position="114"/>
    </location>
</feature>
<name>GBRL1_MOUSE</name>
<reference key="1">
    <citation type="journal article" date="2001" name="Genomics">
        <title>Cloning, expression patterns, and chromosome localization of three human and two mouse homologues of GABA(A) receptor-associated protein.</title>
        <authorList>
            <person name="Xin Y."/>
            <person name="Yu L."/>
            <person name="Chen Z."/>
            <person name="Zheng L."/>
            <person name="Fu Q."/>
            <person name="Jiang J."/>
            <person name="Zhang P."/>
            <person name="Gong R."/>
            <person name="Zhao S."/>
        </authorList>
    </citation>
    <scope>NUCLEOTIDE SEQUENCE [MRNA]</scope>
    <scope>TISSUE SPECIFICITY</scope>
</reference>
<reference key="2">
    <citation type="submission" date="2000-04" db="EMBL/GenBank/DDBJ databases">
        <title>Isolation of full-length cDNA clones from mouse brain cDNA library made by oligo-capping method.</title>
        <authorList>
            <person name="Osada N."/>
            <person name="Kusuda J."/>
            <person name="Tanuma R."/>
            <person name="Ito A."/>
            <person name="Hirata M."/>
            <person name="Sugano S."/>
            <person name="Hashimoto K."/>
        </authorList>
    </citation>
    <scope>NUCLEOTIDE SEQUENCE [LARGE SCALE MRNA]</scope>
    <source>
        <strain>C57BL/6J</strain>
        <tissue>Brain</tissue>
    </source>
</reference>
<reference key="3">
    <citation type="journal article" date="2005" name="Science">
        <title>The transcriptional landscape of the mammalian genome.</title>
        <authorList>
            <person name="Carninci P."/>
            <person name="Kasukawa T."/>
            <person name="Katayama S."/>
            <person name="Gough J."/>
            <person name="Frith M.C."/>
            <person name="Maeda N."/>
            <person name="Oyama R."/>
            <person name="Ravasi T."/>
            <person name="Lenhard B."/>
            <person name="Wells C."/>
            <person name="Kodzius R."/>
            <person name="Shimokawa K."/>
            <person name="Bajic V.B."/>
            <person name="Brenner S.E."/>
            <person name="Batalov S."/>
            <person name="Forrest A.R."/>
            <person name="Zavolan M."/>
            <person name="Davis M.J."/>
            <person name="Wilming L.G."/>
            <person name="Aidinis V."/>
            <person name="Allen J.E."/>
            <person name="Ambesi-Impiombato A."/>
            <person name="Apweiler R."/>
            <person name="Aturaliya R.N."/>
            <person name="Bailey T.L."/>
            <person name="Bansal M."/>
            <person name="Baxter L."/>
            <person name="Beisel K.W."/>
            <person name="Bersano T."/>
            <person name="Bono H."/>
            <person name="Chalk A.M."/>
            <person name="Chiu K.P."/>
            <person name="Choudhary V."/>
            <person name="Christoffels A."/>
            <person name="Clutterbuck D.R."/>
            <person name="Crowe M.L."/>
            <person name="Dalla E."/>
            <person name="Dalrymple B.P."/>
            <person name="de Bono B."/>
            <person name="Della Gatta G."/>
            <person name="di Bernardo D."/>
            <person name="Down T."/>
            <person name="Engstrom P."/>
            <person name="Fagiolini M."/>
            <person name="Faulkner G."/>
            <person name="Fletcher C.F."/>
            <person name="Fukushima T."/>
            <person name="Furuno M."/>
            <person name="Futaki S."/>
            <person name="Gariboldi M."/>
            <person name="Georgii-Hemming P."/>
            <person name="Gingeras T.R."/>
            <person name="Gojobori T."/>
            <person name="Green R.E."/>
            <person name="Gustincich S."/>
            <person name="Harbers M."/>
            <person name="Hayashi Y."/>
            <person name="Hensch T.K."/>
            <person name="Hirokawa N."/>
            <person name="Hill D."/>
            <person name="Huminiecki L."/>
            <person name="Iacono M."/>
            <person name="Ikeo K."/>
            <person name="Iwama A."/>
            <person name="Ishikawa T."/>
            <person name="Jakt M."/>
            <person name="Kanapin A."/>
            <person name="Katoh M."/>
            <person name="Kawasawa Y."/>
            <person name="Kelso J."/>
            <person name="Kitamura H."/>
            <person name="Kitano H."/>
            <person name="Kollias G."/>
            <person name="Krishnan S.P."/>
            <person name="Kruger A."/>
            <person name="Kummerfeld S.K."/>
            <person name="Kurochkin I.V."/>
            <person name="Lareau L.F."/>
            <person name="Lazarevic D."/>
            <person name="Lipovich L."/>
            <person name="Liu J."/>
            <person name="Liuni S."/>
            <person name="McWilliam S."/>
            <person name="Madan Babu M."/>
            <person name="Madera M."/>
            <person name="Marchionni L."/>
            <person name="Matsuda H."/>
            <person name="Matsuzawa S."/>
            <person name="Miki H."/>
            <person name="Mignone F."/>
            <person name="Miyake S."/>
            <person name="Morris K."/>
            <person name="Mottagui-Tabar S."/>
            <person name="Mulder N."/>
            <person name="Nakano N."/>
            <person name="Nakauchi H."/>
            <person name="Ng P."/>
            <person name="Nilsson R."/>
            <person name="Nishiguchi S."/>
            <person name="Nishikawa S."/>
            <person name="Nori F."/>
            <person name="Ohara O."/>
            <person name="Okazaki Y."/>
            <person name="Orlando V."/>
            <person name="Pang K.C."/>
            <person name="Pavan W.J."/>
            <person name="Pavesi G."/>
            <person name="Pesole G."/>
            <person name="Petrovsky N."/>
            <person name="Piazza S."/>
            <person name="Reed J."/>
            <person name="Reid J.F."/>
            <person name="Ring B.Z."/>
            <person name="Ringwald M."/>
            <person name="Rost B."/>
            <person name="Ruan Y."/>
            <person name="Salzberg S.L."/>
            <person name="Sandelin A."/>
            <person name="Schneider C."/>
            <person name="Schoenbach C."/>
            <person name="Sekiguchi K."/>
            <person name="Semple C.A."/>
            <person name="Seno S."/>
            <person name="Sessa L."/>
            <person name="Sheng Y."/>
            <person name="Shibata Y."/>
            <person name="Shimada H."/>
            <person name="Shimada K."/>
            <person name="Silva D."/>
            <person name="Sinclair B."/>
            <person name="Sperling S."/>
            <person name="Stupka E."/>
            <person name="Sugiura K."/>
            <person name="Sultana R."/>
            <person name="Takenaka Y."/>
            <person name="Taki K."/>
            <person name="Tammoja K."/>
            <person name="Tan S.L."/>
            <person name="Tang S."/>
            <person name="Taylor M.S."/>
            <person name="Tegner J."/>
            <person name="Teichmann S.A."/>
            <person name="Ueda H.R."/>
            <person name="van Nimwegen E."/>
            <person name="Verardo R."/>
            <person name="Wei C.L."/>
            <person name="Yagi K."/>
            <person name="Yamanishi H."/>
            <person name="Zabarovsky E."/>
            <person name="Zhu S."/>
            <person name="Zimmer A."/>
            <person name="Hide W."/>
            <person name="Bult C."/>
            <person name="Grimmond S.M."/>
            <person name="Teasdale R.D."/>
            <person name="Liu E.T."/>
            <person name="Brusic V."/>
            <person name="Quackenbush J."/>
            <person name="Wahlestedt C."/>
            <person name="Mattick J.S."/>
            <person name="Hume D.A."/>
            <person name="Kai C."/>
            <person name="Sasaki D."/>
            <person name="Tomaru Y."/>
            <person name="Fukuda S."/>
            <person name="Kanamori-Katayama M."/>
            <person name="Suzuki M."/>
            <person name="Aoki J."/>
            <person name="Arakawa T."/>
            <person name="Iida J."/>
            <person name="Imamura K."/>
            <person name="Itoh M."/>
            <person name="Kato T."/>
            <person name="Kawaji H."/>
            <person name="Kawagashira N."/>
            <person name="Kawashima T."/>
            <person name="Kojima M."/>
            <person name="Kondo S."/>
            <person name="Konno H."/>
            <person name="Nakano K."/>
            <person name="Ninomiya N."/>
            <person name="Nishio T."/>
            <person name="Okada M."/>
            <person name="Plessy C."/>
            <person name="Shibata K."/>
            <person name="Shiraki T."/>
            <person name="Suzuki S."/>
            <person name="Tagami M."/>
            <person name="Waki K."/>
            <person name="Watahiki A."/>
            <person name="Okamura-Oho Y."/>
            <person name="Suzuki H."/>
            <person name="Kawai J."/>
            <person name="Hayashizaki Y."/>
        </authorList>
    </citation>
    <scope>NUCLEOTIDE SEQUENCE [LARGE SCALE MRNA]</scope>
    <source>
        <strain>C57BL/6J</strain>
        <tissue>Amnion</tissue>
        <tissue>Cecum</tissue>
        <tissue>Embryo</tissue>
        <tissue>Placenta</tissue>
        <tissue>Testis</tissue>
        <tissue>Visual cortex</tissue>
    </source>
</reference>
<reference key="4">
    <citation type="journal article" date="2004" name="Genome Res.">
        <title>The status, quality, and expansion of the NIH full-length cDNA project: the Mammalian Gene Collection (MGC).</title>
        <authorList>
            <consortium name="The MGC Project Team"/>
        </authorList>
    </citation>
    <scope>NUCLEOTIDE SEQUENCE [LARGE SCALE MRNA]</scope>
    <source>
        <tissue>Mammary tumor</tissue>
    </source>
</reference>
<reference key="5">
    <citation type="journal article" date="2003" name="J. Biol. Chem.">
        <title>A single protease, Apg4B, is specific for the autophagy-related ubiquitin-like proteins GATE-16, MAP1-LC3, GABARAP, and Apg8L.</title>
        <authorList>
            <person name="Hemelaar J."/>
            <person name="Lelyveld V.S."/>
            <person name="Kessler B.M."/>
            <person name="Ploegh H.L."/>
        </authorList>
    </citation>
    <scope>CLEAVAGE BY ATG4B</scope>
    <scope>SUBCELLULAR LOCATION</scope>
</reference>
<reference key="6">
    <citation type="journal article" date="2006" name="FEBS J.">
        <title>Atg8L/Apg8L is the fourth mammalian modifier of mammalian Atg8 conjugation mediated by human Atg4B, Atg7 and Atg3.</title>
        <authorList>
            <person name="Tanida I."/>
            <person name="Sou Y.S."/>
            <person name="Minematsu-Ikeguchi N."/>
            <person name="Ueno T."/>
            <person name="Kominami E."/>
        </authorList>
    </citation>
    <scope>CLEAVAGE BY ATG4B</scope>
    <scope>INTERACTION WITH ATG3 AND ATG7</scope>
</reference>
<reference key="7">
    <citation type="journal article" date="2010" name="Cell">
        <title>A tissue-specific atlas of mouse protein phosphorylation and expression.</title>
        <authorList>
            <person name="Huttlin E.L."/>
            <person name="Jedrychowski M.P."/>
            <person name="Elias J.E."/>
            <person name="Goswami T."/>
            <person name="Rad R."/>
            <person name="Beausoleil S.A."/>
            <person name="Villen J."/>
            <person name="Haas W."/>
            <person name="Sowa M.E."/>
            <person name="Gygi S.P."/>
        </authorList>
    </citation>
    <scope>IDENTIFICATION BY MASS SPECTROMETRY [LARGE SCALE ANALYSIS]</scope>
    <source>
        <tissue>Brain</tissue>
        <tissue>Liver</tissue>
    </source>
</reference>
<reference key="8">
    <citation type="journal article" date="2016" name="Cell Rep.">
        <title>NCOA4 Deficiency Impairs Systemic Iron Homeostasis.</title>
        <authorList>
            <person name="Bellelli R."/>
            <person name="Federico G."/>
            <person name="Matte' A."/>
            <person name="Colecchia D."/>
            <person name="Iolascon A."/>
            <person name="Chiariello M."/>
            <person name="Santoro M."/>
            <person name="De Franceschi L."/>
            <person name="Carlomagno F."/>
        </authorList>
    </citation>
    <scope>INTERACTION WITH NCOA4</scope>
</reference>
<reference key="9">
    <citation type="journal article" date="2021" name="Cell Death Differ.">
        <title>ATG4D is the main ATG8 delipidating enzyme in mammalian cells and protects against cerebellar neurodegeneration.</title>
        <authorList>
            <person name="Tamargo-Gomez I."/>
            <person name="Martinez-Garcia G.G."/>
            <person name="Suarez M.F."/>
            <person name="Rey V."/>
            <person name="Fueyo A."/>
            <person name="Codina-Martinez H."/>
            <person name="Bretones G."/>
            <person name="Caravia X.M."/>
            <person name="Morel E."/>
            <person name="Dupont N."/>
            <person name="Cabo R."/>
            <person name="Tomas-Zapico C."/>
            <person name="Souquere S."/>
            <person name="Pierron G."/>
            <person name="Codogno P."/>
            <person name="Lopez-Otin C."/>
            <person name="Fernandez A.F."/>
            <person name="Marino G."/>
        </authorList>
    </citation>
    <scope>LIPIDATION</scope>
    <scope>DELIPIDATION</scope>
</reference>
<reference key="10">
    <citation type="journal article" date="2021" name="EMBO Rep.">
        <title>Role of FAM134 paralogues in endoplasmic reticulum remodeling, ER-phagy, and Collagen quality control.</title>
        <authorList>
            <person name="Reggio A."/>
            <person name="Buonomo V."/>
            <person name="Berkane R."/>
            <person name="Bhaskara R.M."/>
            <person name="Tellechea M."/>
            <person name="Peluso I."/>
            <person name="Polishchuk E."/>
            <person name="Di Lorenzo G."/>
            <person name="Cirillo C."/>
            <person name="Esposito M."/>
            <person name="Hussain A."/>
            <person name="Huebner A.K."/>
            <person name="Huebner C.A."/>
            <person name="Settembre C."/>
            <person name="Hummer G."/>
            <person name="Grumati P."/>
            <person name="Stolz A."/>
        </authorList>
    </citation>
    <scope>INTERACTION WITH RETREG1; RETREG2 AND RETREG3</scope>
</reference>
<sequence>MKFQYKEDHPFEYRKKEGEKIRKKYPDRVPVIVEKAPKARVPDLDKRKYLVPSDLTVGQFYFLIRKRIHLRPEDALFFFVNNTIPPTSATMGQLYEDNHEEDYFLYVAYSDESVYGK</sequence>
<evidence type="ECO:0000250" key="1">
    <source>
        <dbReference type="UniProtKB" id="Q0VGK0"/>
    </source>
</evidence>
<evidence type="ECO:0000250" key="2">
    <source>
        <dbReference type="UniProtKB" id="Q9H0R8"/>
    </source>
</evidence>
<evidence type="ECO:0000269" key="3">
    <source>
    </source>
</evidence>
<evidence type="ECO:0000269" key="4">
    <source>
    </source>
</evidence>
<evidence type="ECO:0000269" key="5">
    <source>
    </source>
</evidence>
<evidence type="ECO:0000269" key="6">
    <source>
    </source>
</evidence>
<evidence type="ECO:0000269" key="7">
    <source>
    </source>
</evidence>
<evidence type="ECO:0000269" key="8">
    <source>
    </source>
</evidence>
<evidence type="ECO:0000305" key="9"/>
<evidence type="ECO:0000305" key="10">
    <source>
    </source>
</evidence>
<evidence type="ECO:0000312" key="11">
    <source>
        <dbReference type="MGI" id="MGI:1914980"/>
    </source>
</evidence>
<evidence type="ECO:0007829" key="12">
    <source>
        <dbReference type="PDB" id="5YIP"/>
    </source>
</evidence>
<accession>Q8R3R8</accession>
<accession>Q3TG14</accession>
<accession>Q3TJB9</accession>
<accession>Q3TXZ5</accession>
<accession>Q9JJ97</accession>
<proteinExistence type="evidence at protein level"/>
<gene>
    <name evidence="11" type="primary">Gabarapl1</name>
    <name type="synonym">Apg8l</name>
    <name type="synonym">Atg8l</name>
    <name type="synonym">Gec1</name>
    <name type="ORF">MNCb-0091</name>
</gene>
<comment type="function">
    <text evidence="2">Ubiquitin-like modifier that increases cell-surface expression of kappa-type opioid receptor through facilitating anterograde intracellular trafficking of the receptor. Involved in formation of autophagosomal vacuoles. While LC3s are involved in elongation of the phagophore membrane, the GABARAP/GATE-16 subfamily is essential for a later stage in autophagosome maturation. Through its interaction with the reticulophagy receptor TEX264, participates in the remodeling of subdomains of the endoplasmic reticulum into autophagosomes upon nutrient stress, which then fuse with lysosomes for endoplasmic reticulum turnover.</text>
</comment>
<comment type="subunit">
    <text evidence="2 5 6 8">Interacts with ATG13, OPRK1, RB1CC1 and ULK1 (By similarity). Interacts with TP53INP1 and TP53INP2 (By similarity). Directly interacts with SQSTM1 (By similarity). Interacts with ATG3, ATG7 and MAP15 (PubMed:16704426). Interacts with TECPR2 (By similarity). Interacts with TBC1D5 (By similarity). Interacts with MAPK15 (By similarity). Interacts with TRIM5 (By similarity). Interacts with MEFV and TRIM21 (By similarity). Interacts with WDFY3 (By similarity). Interacts with the reticulophagy receptor TEX264 (By similarity). Interacts with UBA5 (By similarity). Interacts with KBTBD6 and KBTBD7; the interaction is direct (By similarity). Interacts with reticulophagy regulators RETREG1, RETREG2 and RETREG3 (PubMed:34338405). Interacts with Irgm1 (By similarity). Interacts with DNM2 (By similarity). Interacts with NCOA4 (via C-terminus) (PubMed:26776506).</text>
</comment>
<comment type="subcellular location">
    <subcellularLocation>
        <location evidence="4">Cytoplasmic vesicle</location>
        <location evidence="4">Autophagosome</location>
    </subcellularLocation>
    <subcellularLocation>
        <location evidence="2">Cytoplasmic vesicle membrane</location>
        <topology evidence="2">Lipid-anchor</topology>
    </subcellularLocation>
    <subcellularLocation>
        <location evidence="1">Cytoplasm</location>
        <location evidence="1">Cytoskeleton</location>
    </subcellularLocation>
    <subcellularLocation>
        <location evidence="1">Endoplasmic reticulum</location>
    </subcellularLocation>
    <subcellularLocation>
        <location evidence="1">Golgi apparatus</location>
    </subcellularLocation>
</comment>
<comment type="tissue specificity">
    <text evidence="3">Expressed in testis and heart at high levels.</text>
</comment>
<comment type="PTM">
    <text evidence="2 4 5 7">The precursor molecule is cleaved by ATG4 (ATG4A, ATG4B, ATG4C or ATG4D) to expose the glycine at the C-terminus and form the cytosolic form, GABARAPL1-I (PubMed:14530254, PubMed:16704426). The processed form is then activated by APG7L/ATG7, transferred to ATG3 and conjugated to phosphatidylethanolamine (PE) phospholipid to form the membrane-bound form, GABARAPL1-II (By similarity). During non-canonical autophagy, the processed form is conjugated to phosphatidylserine (PS) phospholipid (By similarity). ATG4 proteins also mediate the delipidation of PE-conjugated forms required for GABARAPL1 recycling when autophagosomes fuse with lysosomes (PubMed:33795848). In addition, ATG4B and ATG4D mediate delipidation of ATG8 proteins conjugated to PS during non-canonical autophagy (By similarity). ATG4B constitutes the major protein for proteolytic activation (By similarity). ATG4D is the main enzyme for delipidation activity (PubMed:33795848).</text>
</comment>
<comment type="similarity">
    <text evidence="9">Belongs to the ATG8 family.</text>
</comment>
<comment type="sequence caution" evidence="9">
    <conflict type="erroneous initiation">
        <sequence resource="EMBL-CDS" id="BAE39576"/>
    </conflict>
    <text>Extended N-terminus.</text>
</comment>
<dbReference type="EMBL" id="AF180518">
    <property type="protein sequence ID" value="AAK16236.1"/>
    <property type="molecule type" value="mRNA"/>
</dbReference>
<dbReference type="EMBL" id="AB041648">
    <property type="protein sequence ID" value="BAA95100.1"/>
    <property type="molecule type" value="mRNA"/>
</dbReference>
<dbReference type="EMBL" id="AK011975">
    <property type="protein sequence ID" value="BAB27950.1"/>
    <property type="molecule type" value="mRNA"/>
</dbReference>
<dbReference type="EMBL" id="AK014083">
    <property type="protein sequence ID" value="BAB29146.1"/>
    <property type="molecule type" value="mRNA"/>
</dbReference>
<dbReference type="EMBL" id="AK015049">
    <property type="protein sequence ID" value="BAB29690.1"/>
    <property type="molecule type" value="mRNA"/>
</dbReference>
<dbReference type="EMBL" id="AK018687">
    <property type="protein sequence ID" value="BAB31345.1"/>
    <property type="molecule type" value="mRNA"/>
</dbReference>
<dbReference type="EMBL" id="AK159015">
    <property type="protein sequence ID" value="BAE34769.1"/>
    <property type="molecule type" value="mRNA"/>
</dbReference>
<dbReference type="EMBL" id="AK167500">
    <property type="protein sequence ID" value="BAE39576.1"/>
    <property type="status" value="ALT_INIT"/>
    <property type="molecule type" value="mRNA"/>
</dbReference>
<dbReference type="EMBL" id="AK168921">
    <property type="protein sequence ID" value="BAE40734.1"/>
    <property type="molecule type" value="mRNA"/>
</dbReference>
<dbReference type="EMBL" id="BC004602">
    <property type="protein sequence ID" value="AAH04602.1"/>
    <property type="molecule type" value="mRNA"/>
</dbReference>
<dbReference type="EMBL" id="BC024706">
    <property type="protein sequence ID" value="AAH24706.1"/>
    <property type="molecule type" value="mRNA"/>
</dbReference>
<dbReference type="CCDS" id="CCDS51923.1"/>
<dbReference type="RefSeq" id="NP_065615.1">
    <property type="nucleotide sequence ID" value="NM_020590.4"/>
</dbReference>
<dbReference type="PDB" id="5YIP">
    <property type="method" value="X-ray"/>
    <property type="resolution" value="1.85 A"/>
    <property type="chains" value="A=1-117"/>
</dbReference>
<dbReference type="PDB" id="7CDB">
    <property type="method" value="X-ray"/>
    <property type="resolution" value="1.95 A"/>
    <property type="chains" value="A/B=1-117"/>
</dbReference>
<dbReference type="PDBsum" id="5YIP"/>
<dbReference type="PDBsum" id="7CDB"/>
<dbReference type="SMR" id="Q8R3R8"/>
<dbReference type="BioGRID" id="208293">
    <property type="interactions" value="26"/>
</dbReference>
<dbReference type="FunCoup" id="Q8R3R8">
    <property type="interactions" value="1322"/>
</dbReference>
<dbReference type="IntAct" id="Q8R3R8">
    <property type="interactions" value="1"/>
</dbReference>
<dbReference type="MINT" id="Q8R3R8"/>
<dbReference type="STRING" id="10090.ENSMUSP00000032264"/>
<dbReference type="GlyGen" id="Q8R3R8">
    <property type="glycosylation" value="2 sites, 1 O-linked glycan (1 site)"/>
</dbReference>
<dbReference type="iPTMnet" id="Q8R3R8"/>
<dbReference type="PhosphoSitePlus" id="Q8R3R8"/>
<dbReference type="jPOST" id="Q8R3R8"/>
<dbReference type="PaxDb" id="10090-ENSMUSP00000032264"/>
<dbReference type="PeptideAtlas" id="Q8R3R8"/>
<dbReference type="ProteomicsDB" id="266783"/>
<dbReference type="Pumba" id="Q8R3R8"/>
<dbReference type="Antibodypedia" id="42119">
    <property type="antibodies" value="395 antibodies from 31 providers"/>
</dbReference>
<dbReference type="DNASU" id="57436"/>
<dbReference type="Ensembl" id="ENSMUST00000032264.9">
    <property type="protein sequence ID" value="ENSMUSP00000032264.7"/>
    <property type="gene ID" value="ENSMUSG00000030161.9"/>
</dbReference>
<dbReference type="Ensembl" id="ENSMUST00000204956.2">
    <property type="protein sequence ID" value="ENSMUSP00000145175.2"/>
    <property type="gene ID" value="ENSMUSG00000030161.9"/>
</dbReference>
<dbReference type="GeneID" id="57436"/>
<dbReference type="KEGG" id="mmu:57436"/>
<dbReference type="UCSC" id="uc009efz.1">
    <property type="organism name" value="mouse"/>
</dbReference>
<dbReference type="AGR" id="MGI:1914980"/>
<dbReference type="CTD" id="23710"/>
<dbReference type="MGI" id="MGI:1914980">
    <property type="gene designation" value="Gabarapl1"/>
</dbReference>
<dbReference type="VEuPathDB" id="HostDB:ENSMUSG00000030161"/>
<dbReference type="eggNOG" id="KOG1654">
    <property type="taxonomic scope" value="Eukaryota"/>
</dbReference>
<dbReference type="GeneTree" id="ENSGT00940000156876"/>
<dbReference type="HOGENOM" id="CLU_119276_0_3_1"/>
<dbReference type="InParanoid" id="Q8R3R8"/>
<dbReference type="OMA" id="KNQIRAK"/>
<dbReference type="OrthoDB" id="6738456at2759"/>
<dbReference type="PhylomeDB" id="Q8R3R8"/>
<dbReference type="TreeFam" id="TF314556"/>
<dbReference type="Reactome" id="R-MMU-1632852">
    <property type="pathway name" value="Macroautophagy"/>
</dbReference>
<dbReference type="BioGRID-ORCS" id="57436">
    <property type="hits" value="3 hits in 80 CRISPR screens"/>
</dbReference>
<dbReference type="ChiTaRS" id="Gabarapl1">
    <property type="organism name" value="mouse"/>
</dbReference>
<dbReference type="PRO" id="PR:Q8R3R8"/>
<dbReference type="Proteomes" id="UP000000589">
    <property type="component" value="Chromosome 6"/>
</dbReference>
<dbReference type="RNAct" id="Q8R3R8">
    <property type="molecule type" value="protein"/>
</dbReference>
<dbReference type="Bgee" id="ENSMUSG00000030161">
    <property type="expression patterns" value="Expressed in hypothalamus and 90 other cell types or tissues"/>
</dbReference>
<dbReference type="ExpressionAtlas" id="Q8R3R8">
    <property type="expression patterns" value="baseline and differential"/>
</dbReference>
<dbReference type="GO" id="GO:0005776">
    <property type="term" value="C:autophagosome"/>
    <property type="evidence" value="ECO:0000266"/>
    <property type="project" value="MGI"/>
</dbReference>
<dbReference type="GO" id="GO:0036064">
    <property type="term" value="C:ciliary basal body"/>
    <property type="evidence" value="ECO:0007669"/>
    <property type="project" value="Ensembl"/>
</dbReference>
<dbReference type="GO" id="GO:0030659">
    <property type="term" value="C:cytoplasmic vesicle membrane"/>
    <property type="evidence" value="ECO:0007669"/>
    <property type="project" value="UniProtKB-SubCell"/>
</dbReference>
<dbReference type="GO" id="GO:0005829">
    <property type="term" value="C:cytosol"/>
    <property type="evidence" value="ECO:0007669"/>
    <property type="project" value="Ensembl"/>
</dbReference>
<dbReference type="GO" id="GO:0005783">
    <property type="term" value="C:endoplasmic reticulum"/>
    <property type="evidence" value="ECO:0007669"/>
    <property type="project" value="UniProtKB-SubCell"/>
</dbReference>
<dbReference type="GO" id="GO:0005794">
    <property type="term" value="C:Golgi apparatus"/>
    <property type="evidence" value="ECO:0007669"/>
    <property type="project" value="UniProtKB-SubCell"/>
</dbReference>
<dbReference type="GO" id="GO:0005874">
    <property type="term" value="C:microtubule"/>
    <property type="evidence" value="ECO:0007669"/>
    <property type="project" value="UniProtKB-KW"/>
</dbReference>
<dbReference type="GO" id="GO:0005739">
    <property type="term" value="C:mitochondrion"/>
    <property type="evidence" value="ECO:0007669"/>
    <property type="project" value="Ensembl"/>
</dbReference>
<dbReference type="GO" id="GO:0005886">
    <property type="term" value="C:plasma membrane"/>
    <property type="evidence" value="ECO:0007669"/>
    <property type="project" value="Ensembl"/>
</dbReference>
<dbReference type="GO" id="GO:0008092">
    <property type="term" value="F:cytoskeletal protein binding"/>
    <property type="evidence" value="ECO:0000247"/>
    <property type="project" value="MGI"/>
</dbReference>
<dbReference type="GO" id="GO:0005543">
    <property type="term" value="F:phospholipid binding"/>
    <property type="evidence" value="ECO:0007669"/>
    <property type="project" value="Ensembl"/>
</dbReference>
<dbReference type="GO" id="GO:0043495">
    <property type="term" value="F:protein-membrane adaptor activity"/>
    <property type="evidence" value="ECO:0000266"/>
    <property type="project" value="MGI"/>
</dbReference>
<dbReference type="GO" id="GO:0030957">
    <property type="term" value="F:Tat protein binding"/>
    <property type="evidence" value="ECO:0007669"/>
    <property type="project" value="Ensembl"/>
</dbReference>
<dbReference type="GO" id="GO:0031625">
    <property type="term" value="F:ubiquitin protein ligase binding"/>
    <property type="evidence" value="ECO:0007669"/>
    <property type="project" value="Ensembl"/>
</dbReference>
<dbReference type="GO" id="GO:0061723">
    <property type="term" value="P:glycophagy"/>
    <property type="evidence" value="ECO:0000315"/>
    <property type="project" value="MGI"/>
</dbReference>
<dbReference type="GO" id="GO:0061753">
    <property type="term" value="P:substrate localization to autophagosome"/>
    <property type="evidence" value="ECO:0000266"/>
    <property type="project" value="MGI"/>
</dbReference>
<dbReference type="CDD" id="cd16127">
    <property type="entry name" value="Ubl_ATG8_GABARAP_like"/>
    <property type="match status" value="1"/>
</dbReference>
<dbReference type="FunFam" id="3.10.20.90:FF:000037">
    <property type="entry name" value="Gamma-aminobutyric acid receptor-associated protein-like 1"/>
    <property type="match status" value="1"/>
</dbReference>
<dbReference type="Gene3D" id="3.10.20.90">
    <property type="entry name" value="Phosphatidylinositol 3-kinase Catalytic Subunit, Chain A, domain 1"/>
    <property type="match status" value="1"/>
</dbReference>
<dbReference type="InterPro" id="IPR004241">
    <property type="entry name" value="Atg8-like"/>
</dbReference>
<dbReference type="InterPro" id="IPR029071">
    <property type="entry name" value="Ubiquitin-like_domsf"/>
</dbReference>
<dbReference type="PANTHER" id="PTHR10969">
    <property type="entry name" value="MICROTUBULE-ASSOCIATED PROTEINS 1A/1B LIGHT CHAIN 3-RELATED"/>
    <property type="match status" value="1"/>
</dbReference>
<dbReference type="Pfam" id="PF02991">
    <property type="entry name" value="ATG8"/>
    <property type="match status" value="1"/>
</dbReference>
<dbReference type="SUPFAM" id="SSF54236">
    <property type="entry name" value="Ubiquitin-like"/>
    <property type="match status" value="1"/>
</dbReference>
<keyword id="KW-0002">3D-structure</keyword>
<keyword id="KW-0072">Autophagy</keyword>
<keyword id="KW-0963">Cytoplasm</keyword>
<keyword id="KW-0968">Cytoplasmic vesicle</keyword>
<keyword id="KW-0206">Cytoskeleton</keyword>
<keyword id="KW-0256">Endoplasmic reticulum</keyword>
<keyword id="KW-0333">Golgi apparatus</keyword>
<keyword id="KW-0449">Lipoprotein</keyword>
<keyword id="KW-0472">Membrane</keyword>
<keyword id="KW-0493">Microtubule</keyword>
<keyword id="KW-1185">Reference proteome</keyword>